<gene>
    <name type="primary">LINC00299</name>
    <name type="synonym">C2orf46</name>
    <name type="synonym">NCRNA00299</name>
</gene>
<accession>Q6ZSB3</accession>
<dbReference type="EMBL" id="AK127578">
    <property type="protein sequence ID" value="BAC87041.1"/>
    <property type="molecule type" value="mRNA"/>
</dbReference>
<dbReference type="EMBL" id="AC092177">
    <property type="status" value="NOT_ANNOTATED_CDS"/>
    <property type="molecule type" value="Genomic_DNA"/>
</dbReference>
<dbReference type="BioMuta" id="HGNC:27940"/>
<dbReference type="ProteomicsDB" id="68211"/>
<dbReference type="AGR" id="HGNC:27940"/>
<dbReference type="GeneCards" id="LINC00299"/>
<dbReference type="HGNC" id="HGNC:27940">
    <property type="gene designation" value="LINC00299"/>
</dbReference>
<dbReference type="neXtProt" id="NX_Q6ZSB3"/>
<dbReference type="InParanoid" id="Q6ZSB3"/>
<dbReference type="PAN-GO" id="Q6ZSB3">
    <property type="GO annotations" value="0 GO annotations based on evolutionary models"/>
</dbReference>
<dbReference type="ChiTaRS" id="LINC00299">
    <property type="organism name" value="human"/>
</dbReference>
<dbReference type="Pharos" id="Q6ZSB3">
    <property type="development level" value="Tdark"/>
</dbReference>
<dbReference type="Proteomes" id="UP000005640">
    <property type="component" value="Unplaced"/>
</dbReference>
<dbReference type="RNAct" id="Q6ZSB3">
    <property type="molecule type" value="protein"/>
</dbReference>
<evidence type="ECO:0000256" key="1">
    <source>
        <dbReference type="SAM" id="MobiDB-lite"/>
    </source>
</evidence>
<evidence type="ECO:0000305" key="2"/>
<protein>
    <recommendedName>
        <fullName>Putative uncharacterized protein encoded by LINC00299</fullName>
    </recommendedName>
</protein>
<reference key="1">
    <citation type="journal article" date="2004" name="Nat. Genet.">
        <title>Complete sequencing and characterization of 21,243 full-length human cDNAs.</title>
        <authorList>
            <person name="Ota T."/>
            <person name="Suzuki Y."/>
            <person name="Nishikawa T."/>
            <person name="Otsuki T."/>
            <person name="Sugiyama T."/>
            <person name="Irie R."/>
            <person name="Wakamatsu A."/>
            <person name="Hayashi K."/>
            <person name="Sato H."/>
            <person name="Nagai K."/>
            <person name="Kimura K."/>
            <person name="Makita H."/>
            <person name="Sekine M."/>
            <person name="Obayashi M."/>
            <person name="Nishi T."/>
            <person name="Shibahara T."/>
            <person name="Tanaka T."/>
            <person name="Ishii S."/>
            <person name="Yamamoto J."/>
            <person name="Saito K."/>
            <person name="Kawai Y."/>
            <person name="Isono Y."/>
            <person name="Nakamura Y."/>
            <person name="Nagahari K."/>
            <person name="Murakami K."/>
            <person name="Yasuda T."/>
            <person name="Iwayanagi T."/>
            <person name="Wagatsuma M."/>
            <person name="Shiratori A."/>
            <person name="Sudo H."/>
            <person name="Hosoiri T."/>
            <person name="Kaku Y."/>
            <person name="Kodaira H."/>
            <person name="Kondo H."/>
            <person name="Sugawara M."/>
            <person name="Takahashi M."/>
            <person name="Kanda K."/>
            <person name="Yokoi T."/>
            <person name="Furuya T."/>
            <person name="Kikkawa E."/>
            <person name="Omura Y."/>
            <person name="Abe K."/>
            <person name="Kamihara K."/>
            <person name="Katsuta N."/>
            <person name="Sato K."/>
            <person name="Tanikawa M."/>
            <person name="Yamazaki M."/>
            <person name="Ninomiya K."/>
            <person name="Ishibashi T."/>
            <person name="Yamashita H."/>
            <person name="Murakawa K."/>
            <person name="Fujimori K."/>
            <person name="Tanai H."/>
            <person name="Kimata M."/>
            <person name="Watanabe M."/>
            <person name="Hiraoka S."/>
            <person name="Chiba Y."/>
            <person name="Ishida S."/>
            <person name="Ono Y."/>
            <person name="Takiguchi S."/>
            <person name="Watanabe S."/>
            <person name="Yosida M."/>
            <person name="Hotuta T."/>
            <person name="Kusano J."/>
            <person name="Kanehori K."/>
            <person name="Takahashi-Fujii A."/>
            <person name="Hara H."/>
            <person name="Tanase T.-O."/>
            <person name="Nomura Y."/>
            <person name="Togiya S."/>
            <person name="Komai F."/>
            <person name="Hara R."/>
            <person name="Takeuchi K."/>
            <person name="Arita M."/>
            <person name="Imose N."/>
            <person name="Musashino K."/>
            <person name="Yuuki H."/>
            <person name="Oshima A."/>
            <person name="Sasaki N."/>
            <person name="Aotsuka S."/>
            <person name="Yoshikawa Y."/>
            <person name="Matsunawa H."/>
            <person name="Ichihara T."/>
            <person name="Shiohata N."/>
            <person name="Sano S."/>
            <person name="Moriya S."/>
            <person name="Momiyama H."/>
            <person name="Satoh N."/>
            <person name="Takami S."/>
            <person name="Terashima Y."/>
            <person name="Suzuki O."/>
            <person name="Nakagawa S."/>
            <person name="Senoh A."/>
            <person name="Mizoguchi H."/>
            <person name="Goto Y."/>
            <person name="Shimizu F."/>
            <person name="Wakebe H."/>
            <person name="Hishigaki H."/>
            <person name="Watanabe T."/>
            <person name="Sugiyama A."/>
            <person name="Takemoto M."/>
            <person name="Kawakami B."/>
            <person name="Yamazaki M."/>
            <person name="Watanabe K."/>
            <person name="Kumagai A."/>
            <person name="Itakura S."/>
            <person name="Fukuzumi Y."/>
            <person name="Fujimori Y."/>
            <person name="Komiyama M."/>
            <person name="Tashiro H."/>
            <person name="Tanigami A."/>
            <person name="Fujiwara T."/>
            <person name="Ono T."/>
            <person name="Yamada K."/>
            <person name="Fujii Y."/>
            <person name="Ozaki K."/>
            <person name="Hirao M."/>
            <person name="Ohmori Y."/>
            <person name="Kawabata A."/>
            <person name="Hikiji T."/>
            <person name="Kobatake N."/>
            <person name="Inagaki H."/>
            <person name="Ikema Y."/>
            <person name="Okamoto S."/>
            <person name="Okitani R."/>
            <person name="Kawakami T."/>
            <person name="Noguchi S."/>
            <person name="Itoh T."/>
            <person name="Shigeta K."/>
            <person name="Senba T."/>
            <person name="Matsumura K."/>
            <person name="Nakajima Y."/>
            <person name="Mizuno T."/>
            <person name="Morinaga M."/>
            <person name="Sasaki M."/>
            <person name="Togashi T."/>
            <person name="Oyama M."/>
            <person name="Hata H."/>
            <person name="Watanabe M."/>
            <person name="Komatsu T."/>
            <person name="Mizushima-Sugano J."/>
            <person name="Satoh T."/>
            <person name="Shirai Y."/>
            <person name="Takahashi Y."/>
            <person name="Nakagawa K."/>
            <person name="Okumura K."/>
            <person name="Nagase T."/>
            <person name="Nomura N."/>
            <person name="Kikuchi H."/>
            <person name="Masuho Y."/>
            <person name="Yamashita R."/>
            <person name="Nakai K."/>
            <person name="Yada T."/>
            <person name="Nakamura Y."/>
            <person name="Ohara O."/>
            <person name="Isogai T."/>
            <person name="Sugano S."/>
        </authorList>
    </citation>
    <scope>NUCLEOTIDE SEQUENCE [LARGE SCALE MRNA]</scope>
</reference>
<reference key="2">
    <citation type="journal article" date="2005" name="Nature">
        <title>Generation and annotation of the DNA sequences of human chromosomes 2 and 4.</title>
        <authorList>
            <person name="Hillier L.W."/>
            <person name="Graves T.A."/>
            <person name="Fulton R.S."/>
            <person name="Fulton L.A."/>
            <person name="Pepin K.H."/>
            <person name="Minx P."/>
            <person name="Wagner-McPherson C."/>
            <person name="Layman D."/>
            <person name="Wylie K."/>
            <person name="Sekhon M."/>
            <person name="Becker M.C."/>
            <person name="Fewell G.A."/>
            <person name="Delehaunty K.D."/>
            <person name="Miner T.L."/>
            <person name="Nash W.E."/>
            <person name="Kremitzki C."/>
            <person name="Oddy L."/>
            <person name="Du H."/>
            <person name="Sun H."/>
            <person name="Bradshaw-Cordum H."/>
            <person name="Ali J."/>
            <person name="Carter J."/>
            <person name="Cordes M."/>
            <person name="Harris A."/>
            <person name="Isak A."/>
            <person name="van Brunt A."/>
            <person name="Nguyen C."/>
            <person name="Du F."/>
            <person name="Courtney L."/>
            <person name="Kalicki J."/>
            <person name="Ozersky P."/>
            <person name="Abbott S."/>
            <person name="Armstrong J."/>
            <person name="Belter E.A."/>
            <person name="Caruso L."/>
            <person name="Cedroni M."/>
            <person name="Cotton M."/>
            <person name="Davidson T."/>
            <person name="Desai A."/>
            <person name="Elliott G."/>
            <person name="Erb T."/>
            <person name="Fronick C."/>
            <person name="Gaige T."/>
            <person name="Haakenson W."/>
            <person name="Haglund K."/>
            <person name="Holmes A."/>
            <person name="Harkins R."/>
            <person name="Kim K."/>
            <person name="Kruchowski S.S."/>
            <person name="Strong C.M."/>
            <person name="Grewal N."/>
            <person name="Goyea E."/>
            <person name="Hou S."/>
            <person name="Levy A."/>
            <person name="Martinka S."/>
            <person name="Mead K."/>
            <person name="McLellan M.D."/>
            <person name="Meyer R."/>
            <person name="Randall-Maher J."/>
            <person name="Tomlinson C."/>
            <person name="Dauphin-Kohlberg S."/>
            <person name="Kozlowicz-Reilly A."/>
            <person name="Shah N."/>
            <person name="Swearengen-Shahid S."/>
            <person name="Snider J."/>
            <person name="Strong J.T."/>
            <person name="Thompson J."/>
            <person name="Yoakum M."/>
            <person name="Leonard S."/>
            <person name="Pearman C."/>
            <person name="Trani L."/>
            <person name="Radionenko M."/>
            <person name="Waligorski J.E."/>
            <person name="Wang C."/>
            <person name="Rock S.M."/>
            <person name="Tin-Wollam A.-M."/>
            <person name="Maupin R."/>
            <person name="Latreille P."/>
            <person name="Wendl M.C."/>
            <person name="Yang S.-P."/>
            <person name="Pohl C."/>
            <person name="Wallis J.W."/>
            <person name="Spieth J."/>
            <person name="Bieri T.A."/>
            <person name="Berkowicz N."/>
            <person name="Nelson J.O."/>
            <person name="Osborne J."/>
            <person name="Ding L."/>
            <person name="Meyer R."/>
            <person name="Sabo A."/>
            <person name="Shotland Y."/>
            <person name="Sinha P."/>
            <person name="Wohldmann P.E."/>
            <person name="Cook L.L."/>
            <person name="Hickenbotham M.T."/>
            <person name="Eldred J."/>
            <person name="Williams D."/>
            <person name="Jones T.A."/>
            <person name="She X."/>
            <person name="Ciccarelli F.D."/>
            <person name="Izaurralde E."/>
            <person name="Taylor J."/>
            <person name="Schmutz J."/>
            <person name="Myers R.M."/>
            <person name="Cox D.R."/>
            <person name="Huang X."/>
            <person name="McPherson J.D."/>
            <person name="Mardis E.R."/>
            <person name="Clifton S.W."/>
            <person name="Warren W.C."/>
            <person name="Chinwalla A.T."/>
            <person name="Eddy S.R."/>
            <person name="Marra M.A."/>
            <person name="Ovcharenko I."/>
            <person name="Furey T.S."/>
            <person name="Miller W."/>
            <person name="Eichler E.E."/>
            <person name="Bork P."/>
            <person name="Suyama M."/>
            <person name="Torrents D."/>
            <person name="Waterston R.H."/>
            <person name="Wilson R.K."/>
        </authorList>
    </citation>
    <scope>NUCLEOTIDE SEQUENCE [LARGE SCALE GENOMIC DNA]</scope>
</reference>
<feature type="chain" id="PRO_0000264615" description="Putative uncharacterized protein encoded by LINC00299">
    <location>
        <begin position="1"/>
        <end position="139"/>
    </location>
</feature>
<feature type="region of interest" description="Disordered" evidence="1">
    <location>
        <begin position="54"/>
        <end position="75"/>
    </location>
</feature>
<name>CB046_HUMAN</name>
<sequence>MVQREKARDNFEGGCLAELIGSPRDWKCFLAVPDPLLGVQHWLHLWRPQTKDGNSLHRHGDQAWGKHRRQNSLKSPALSGHSIDYHFYPRLRCGMLIGPDKQAVASGLEVLVTSSTKILGQLFPDAAHFLEEASEFKAE</sequence>
<comment type="caution">
    <text evidence="2">Product of a dubious CDS prediction. May be a non-coding RNA.</text>
</comment>
<keyword id="KW-1185">Reference proteome</keyword>
<organism>
    <name type="scientific">Homo sapiens</name>
    <name type="common">Human</name>
    <dbReference type="NCBI Taxonomy" id="9606"/>
    <lineage>
        <taxon>Eukaryota</taxon>
        <taxon>Metazoa</taxon>
        <taxon>Chordata</taxon>
        <taxon>Craniata</taxon>
        <taxon>Vertebrata</taxon>
        <taxon>Euteleostomi</taxon>
        <taxon>Mammalia</taxon>
        <taxon>Eutheria</taxon>
        <taxon>Euarchontoglires</taxon>
        <taxon>Primates</taxon>
        <taxon>Haplorrhini</taxon>
        <taxon>Catarrhini</taxon>
        <taxon>Hominidae</taxon>
        <taxon>Homo</taxon>
    </lineage>
</organism>
<proteinExistence type="uncertain"/>